<name>PARA_MYXXD</name>
<comment type="function">
    <text evidence="1 5">An essential component of the chromosome segregation machinery (PubMed:24466283). The ParABS system segregates newly replicated chromosomes during bacterial cell division. After DNA replication the ParB-parS partition complexes interact with ParA ATPase, promoting the movement of the origin region towards opposite cell poles. Segregation may be driven by rachet-like mechanism where ParB follows a retracting polar gradient of nucleoid-associated ParA (Probable) (PubMed:29180656).</text>
</comment>
<comment type="subunit">
    <text evidence="2 5">Monomeric ParA interacts with PadC; PadC recruits ParA to the bactofilin scaffold (PubMed:29180656). Probably cycles between a monomer and dimer; ATP-binding promotes homodimers which bind DNA, ATP hydrolysis causes dimer and DNA dissociation (Probable) (PubMed:29180656).</text>
</comment>
<comment type="subcellular location">
    <subcellularLocation>
        <location evidence="1 2">Cytoplasm</location>
    </subcellularLocation>
    <text evidence="1 2 3">Located in elongated subpolar patches in DNA-free regions and in about 15% of cells in the cell division plane (PubMed:24466283, PubMed:29180656, PubMed:32738827). In the absence of parB colocalizes with DNA (PubMed:24466283). The pole distal end of the patches colocalizes with the ParB-parS complex (PubMed:24466283, PubMed:29180656). Targeted to bactofilins by PadC (PubMed:29180656). Requires bactofilins for localization, found distributed over the whole cell in the absence of bacP or bacNOP (PubMed:29180656).</text>
</comment>
<comment type="disruption phenotype">
    <text evidence="1">Essential, it cannot be deleted (PubMed:24466283).</text>
</comment>
<comment type="similarity">
    <text evidence="4">Belongs to the ParA family.</text>
</comment>
<evidence type="ECO:0000269" key="1">
    <source>
    </source>
</evidence>
<evidence type="ECO:0000269" key="2">
    <source>
    </source>
</evidence>
<evidence type="ECO:0000269" key="3">
    <source>
    </source>
</evidence>
<evidence type="ECO:0000305" key="4"/>
<evidence type="ECO:0000305" key="5">
    <source>
    </source>
</evidence>
<evidence type="ECO:0000312" key="6">
    <source>
        <dbReference type="EMBL" id="ABF92612.1"/>
    </source>
</evidence>
<sequence length="283" mass="31231">MHCITRGALAYGRGERGWATVGRIICISNQKGGVGKTTTAINLAASLASAERRTLLVDMDPQGNAGSGLGIKQDNITGTIYEALLNDRPIQELLHPTELRYLQVVPATPDLTGAEVELVNQDNREFRLRDALRPLAAEYDYIIIDCPPSLGLLTLNALAAADSVLIPLQCEYYALEGLSQLTHTIDLVKQGLNPDLKMEGILLTMFDSRANIAHQVVEEVRGYFKKQVFEVIVPRNVRLSECPSFGKPIILYDIKSKGCESYLALGRELMKRDTPKSPRRRVA</sequence>
<feature type="chain" id="PRO_0000460330" description="Chromosome partitioning protein ParA">
    <location>
        <begin position="1"/>
        <end position="283"/>
    </location>
</feature>
<feature type="mutagenesis site" description="Probably does not dimerize, no longer binds DNA in E.coli, still interacts with PadC." evidence="2">
    <original>K</original>
    <variation>A</variation>
    <location>
        <position position="31"/>
    </location>
</feature>
<feature type="mutagenesis site" description="Probably does not dimerize, no longer binds DNA in E.coli, still interacts with PadC in M.xanthus." evidence="2">
    <original>G</original>
    <variation>V</variation>
    <location>
        <position position="32"/>
    </location>
</feature>
<feature type="mutagenesis site" description="Probably cannot hydrolyze ATP, remains dimeric, binds DNA in E.coli, forms multiple foci in M.xanthus." evidence="2">
    <original>K</original>
    <variation>R</variation>
    <location>
        <position position="36"/>
    </location>
</feature>
<feature type="mutagenesis site" description="Probably cannot hydrolyze ATP, remains dimeric, binds DNA in E.coli, forms multiple foci in M.xanthus." evidence="2">
    <original>D</original>
    <variation>A</variation>
    <location>
        <position position="60"/>
    </location>
</feature>
<feature type="mutagenesis site" description="No DNA-binding alone, in presence of PadC binds DNA in E.coli, still interacts with PadC in M.xanthus." evidence="2">
    <original>R</original>
    <variation>A</variation>
    <location>
        <position position="209"/>
    </location>
</feature>
<feature type="mutagenesis site" description="No DNA-binding alone, in presence of PadC binds DNA in E.coli." evidence="2">
    <original>R</original>
    <variation>E</variation>
    <location>
        <position position="238"/>
    </location>
</feature>
<dbReference type="EMBL" id="CP000113">
    <property type="protein sequence ID" value="ABF92612.1"/>
    <property type="molecule type" value="Genomic_DNA"/>
</dbReference>
<dbReference type="SMR" id="Q1CVJ3"/>
<dbReference type="STRING" id="246197.MXAN_7477"/>
<dbReference type="EnsemblBacteria" id="ABF92612">
    <property type="protein sequence ID" value="ABF92612"/>
    <property type="gene ID" value="MXAN_7477"/>
</dbReference>
<dbReference type="KEGG" id="mxa:MXAN_7477"/>
<dbReference type="eggNOG" id="COG1192">
    <property type="taxonomic scope" value="Bacteria"/>
</dbReference>
<dbReference type="HOGENOM" id="CLU_037612_1_4_7"/>
<dbReference type="Proteomes" id="UP000002402">
    <property type="component" value="Chromosome"/>
</dbReference>
<dbReference type="GO" id="GO:0005737">
    <property type="term" value="C:cytoplasm"/>
    <property type="evidence" value="ECO:0007669"/>
    <property type="project" value="UniProtKB-SubCell"/>
</dbReference>
<dbReference type="GO" id="GO:0005524">
    <property type="term" value="F:ATP binding"/>
    <property type="evidence" value="ECO:0007669"/>
    <property type="project" value="UniProtKB-KW"/>
</dbReference>
<dbReference type="GO" id="GO:0003677">
    <property type="term" value="F:DNA binding"/>
    <property type="evidence" value="ECO:0007669"/>
    <property type="project" value="UniProtKB-KW"/>
</dbReference>
<dbReference type="GO" id="GO:0007059">
    <property type="term" value="P:chromosome segregation"/>
    <property type="evidence" value="ECO:0007669"/>
    <property type="project" value="UniProtKB-KW"/>
</dbReference>
<dbReference type="CDD" id="cd02042">
    <property type="entry name" value="ParAB_family"/>
    <property type="match status" value="1"/>
</dbReference>
<dbReference type="FunFam" id="3.40.50.300:FF:000285">
    <property type="entry name" value="Sporulation initiation inhibitor Soj"/>
    <property type="match status" value="1"/>
</dbReference>
<dbReference type="Gene3D" id="3.40.50.300">
    <property type="entry name" value="P-loop containing nucleotide triphosphate hydrolases"/>
    <property type="match status" value="1"/>
</dbReference>
<dbReference type="InterPro" id="IPR025669">
    <property type="entry name" value="AAA_dom"/>
</dbReference>
<dbReference type="InterPro" id="IPR050678">
    <property type="entry name" value="DNA_Partitioning_ATPase"/>
</dbReference>
<dbReference type="InterPro" id="IPR027417">
    <property type="entry name" value="P-loop_NTPase"/>
</dbReference>
<dbReference type="PANTHER" id="PTHR13696">
    <property type="entry name" value="P-LOOP CONTAINING NUCLEOSIDE TRIPHOSPHATE HYDROLASE"/>
    <property type="match status" value="1"/>
</dbReference>
<dbReference type="PANTHER" id="PTHR13696:SF52">
    <property type="entry name" value="PARA FAMILY PROTEIN CT_582"/>
    <property type="match status" value="1"/>
</dbReference>
<dbReference type="Pfam" id="PF13614">
    <property type="entry name" value="AAA_31"/>
    <property type="match status" value="1"/>
</dbReference>
<dbReference type="SUPFAM" id="SSF52540">
    <property type="entry name" value="P-loop containing nucleoside triphosphate hydrolases"/>
    <property type="match status" value="1"/>
</dbReference>
<accession>Q1CVJ3</accession>
<protein>
    <recommendedName>
        <fullName>Chromosome partitioning protein ParA</fullName>
    </recommendedName>
</protein>
<organism>
    <name type="scientific">Myxococcus xanthus (strain DK1622)</name>
    <dbReference type="NCBI Taxonomy" id="246197"/>
    <lineage>
        <taxon>Bacteria</taxon>
        <taxon>Pseudomonadati</taxon>
        <taxon>Myxococcota</taxon>
        <taxon>Myxococcia</taxon>
        <taxon>Myxococcales</taxon>
        <taxon>Cystobacterineae</taxon>
        <taxon>Myxococcaceae</taxon>
        <taxon>Myxococcus</taxon>
    </lineage>
</organism>
<proteinExistence type="evidence at protein level"/>
<reference evidence="6" key="1">
    <citation type="journal article" date="2006" name="Proc. Natl. Acad. Sci. U.S.A.">
        <title>Evolution of sensory complexity recorded in a myxobacterial genome.</title>
        <authorList>
            <person name="Goldman B.S."/>
            <person name="Nierman W.C."/>
            <person name="Kaiser D."/>
            <person name="Slater S.C."/>
            <person name="Durkin A.S."/>
            <person name="Eisen J.A."/>
            <person name="Ronning C.M."/>
            <person name="Barbazuk W.B."/>
            <person name="Blanchard M."/>
            <person name="Field C."/>
            <person name="Halling C."/>
            <person name="Hinkle G."/>
            <person name="Iartchuk O."/>
            <person name="Kim H.S."/>
            <person name="Mackenzie C."/>
            <person name="Madupu R."/>
            <person name="Miller N."/>
            <person name="Shvartsbeyn A."/>
            <person name="Sullivan S.A."/>
            <person name="Vaudin M."/>
            <person name="Wiegand R."/>
            <person name="Kaplan H.B."/>
        </authorList>
    </citation>
    <scope>NUCLEOTIDE SEQUENCE [LARGE SCALE GENOMIC DNA]</scope>
    <source>
        <strain>DK1622</strain>
    </source>
</reference>
<reference key="2">
    <citation type="journal article" date="2014" name="PLoS ONE">
        <title>ParABS system in chromosome partitioning in the bacterium Myxococcus xanthus.</title>
        <authorList>
            <person name="Iniesta A.A."/>
        </authorList>
    </citation>
    <scope>SUBCELLULAR LOCATION</scope>
    <scope>DISRUPTION PHENOTYPE</scope>
    <source>
        <strain>DK1050</strain>
        <strain>DK1622</strain>
    </source>
</reference>
<reference key="3">
    <citation type="journal article" date="2017" name="Nat. Commun.">
        <title>Bactofilin-mediated organization of the ParABS chromosome segregation system in Myxococcus xanthus.</title>
        <authorList>
            <person name="Lin L."/>
            <person name="Osorio Valeriano M."/>
            <person name="Harms A."/>
            <person name="Soegaard-Andersen L."/>
            <person name="Thanbichler M."/>
        </authorList>
    </citation>
    <scope>FUNCTION</scope>
    <scope>INTERACTION WITH PADC</scope>
    <scope>SUBCELLULAR LOCATION</scope>
    <scope>ATP-BINDING</scope>
    <scope>DNA-BINDING</scope>
    <scope>MUTAGENESIS OF LYS-31; GLY-32; LYS-36; ASP-60; ARG-209 AND ARG-238</scope>
    <source>
        <strain>DK1622</strain>
    </source>
</reference>
<reference key="4">
    <citation type="journal article" date="2020" name="Mol. Microbiol.">
        <title>SMC and the bactofilin/PadC scaffold have distinct yet redundant functions in chromosome segregation and organization in Myxococcus xanthus.</title>
        <authorList>
            <person name="Anand D."/>
            <person name="Schumacher D."/>
            <person name="Soegaard-Andersen L."/>
        </authorList>
    </citation>
    <scope>SUBCELLULAR LOCATION</scope>
    <source>
        <strain>DK1622</strain>
    </source>
</reference>
<gene>
    <name type="primary">parA</name>
    <name evidence="6" type="ordered locus">MXAN_7477</name>
</gene>
<keyword id="KW-0067">ATP-binding</keyword>
<keyword id="KW-0159">Chromosome partition</keyword>
<keyword id="KW-0963">Cytoplasm</keyword>
<keyword id="KW-0238">DNA-binding</keyword>
<keyword id="KW-0547">Nucleotide-binding</keyword>
<keyword id="KW-1185">Reference proteome</keyword>